<accession>P81385</accession>
<name>CU1B_HOMAM</name>
<dbReference type="OrthoDB" id="6359117at2759"/>
<dbReference type="GO" id="GO:0062129">
    <property type="term" value="C:chitin-based extracellular matrix"/>
    <property type="evidence" value="ECO:0007669"/>
    <property type="project" value="TreeGrafter"/>
</dbReference>
<dbReference type="GO" id="GO:0008010">
    <property type="term" value="F:structural constituent of chitin-based larval cuticle"/>
    <property type="evidence" value="ECO:0007669"/>
    <property type="project" value="TreeGrafter"/>
</dbReference>
<dbReference type="InterPro" id="IPR031311">
    <property type="entry name" value="CHIT_BIND_RR_consensus"/>
</dbReference>
<dbReference type="InterPro" id="IPR050468">
    <property type="entry name" value="Cuticle_Struct_Prot"/>
</dbReference>
<dbReference type="InterPro" id="IPR000618">
    <property type="entry name" value="Insect_cuticle"/>
</dbReference>
<dbReference type="PANTHER" id="PTHR10380">
    <property type="entry name" value="CUTICLE PROTEIN"/>
    <property type="match status" value="1"/>
</dbReference>
<dbReference type="PANTHER" id="PTHR10380:SF173">
    <property type="entry name" value="CUTICULAR PROTEIN 47EF, ISOFORM C-RELATED"/>
    <property type="match status" value="1"/>
</dbReference>
<dbReference type="Pfam" id="PF00379">
    <property type="entry name" value="Chitin_bind_4"/>
    <property type="match status" value="1"/>
</dbReference>
<dbReference type="PRINTS" id="PR00947">
    <property type="entry name" value="CUTICLE"/>
</dbReference>
<dbReference type="PROSITE" id="PS00233">
    <property type="entry name" value="CHIT_BIND_RR_1"/>
    <property type="match status" value="1"/>
</dbReference>
<dbReference type="PROSITE" id="PS51155">
    <property type="entry name" value="CHIT_BIND_RR_2"/>
    <property type="match status" value="1"/>
</dbReference>
<keyword id="KW-0193">Cuticle</keyword>
<keyword id="KW-0903">Direct protein sequencing</keyword>
<protein>
    <recommendedName>
        <fullName>Cuticle protein AMP1B</fullName>
    </recommendedName>
    <alternativeName>
        <fullName>HA-AMP1B</fullName>
    </alternativeName>
</protein>
<organism>
    <name type="scientific">Homarus americanus</name>
    <name type="common">American lobster</name>
    <dbReference type="NCBI Taxonomy" id="6706"/>
    <lineage>
        <taxon>Eukaryota</taxon>
        <taxon>Metazoa</taxon>
        <taxon>Ecdysozoa</taxon>
        <taxon>Arthropoda</taxon>
        <taxon>Crustacea</taxon>
        <taxon>Multicrustacea</taxon>
        <taxon>Malacostraca</taxon>
        <taxon>Eumalacostraca</taxon>
        <taxon>Eucarida</taxon>
        <taxon>Decapoda</taxon>
        <taxon>Pleocyemata</taxon>
        <taxon>Astacidea</taxon>
        <taxon>Nephropoidea</taxon>
        <taxon>Nephropidae</taxon>
        <taxon>Homarus</taxon>
    </lineage>
</organism>
<comment type="tissue specificity">
    <text>Arthrodial membrane.</text>
</comment>
<reference key="1">
    <citation type="journal article" date="1998" name="Comp. Biochem. Physiol.">
        <title>Characterization of exoskeletal proteins from the American lobster, Homarus americanus.</title>
        <authorList>
            <person name="Nousiainen M."/>
            <person name="Rafn K."/>
            <person name="Skou L."/>
            <person name="Roepstorff P."/>
            <person name="Andersen S.O."/>
        </authorList>
    </citation>
    <scope>PROTEIN SEQUENCE</scope>
    <source>
        <tissue>Cuticle</tissue>
    </source>
</reference>
<proteinExistence type="evidence at protein level"/>
<feature type="chain" id="PRO_0000196151" description="Cuticle protein AMP1B">
    <location>
        <begin position="1"/>
        <end position="105"/>
    </location>
</feature>
<feature type="domain" description="Chitin-binding type R&amp;R" evidence="1">
    <location>
        <begin position="16"/>
        <end position="81"/>
    </location>
</feature>
<feature type="region of interest" description="Disordered" evidence="2">
    <location>
        <begin position="1"/>
        <end position="21"/>
    </location>
</feature>
<evidence type="ECO:0000255" key="1">
    <source>
        <dbReference type="PROSITE-ProRule" id="PRU00497"/>
    </source>
</evidence>
<evidence type="ECO:0000256" key="2">
    <source>
        <dbReference type="SAM" id="MobiDB-lite"/>
    </source>
</evidence>
<sequence>DRDAQTLTDERSDQGDGNFRYEFETSNGIYTQKTGTPGSEGQSNHQGSFRFTLEDGTIAEVTYIADEYGYQPSSDLLPVPPPAPPHVQRLLEIAAEQRAQGITFD</sequence>